<name>CDD_VIBVY</name>
<comment type="function">
    <text evidence="1">This enzyme scavenges exogenous and endogenous cytidine and 2'-deoxycytidine for UMP synthesis.</text>
</comment>
<comment type="catalytic activity">
    <reaction evidence="1">
        <text>cytidine + H2O + H(+) = uridine + NH4(+)</text>
        <dbReference type="Rhea" id="RHEA:16069"/>
        <dbReference type="ChEBI" id="CHEBI:15377"/>
        <dbReference type="ChEBI" id="CHEBI:15378"/>
        <dbReference type="ChEBI" id="CHEBI:16704"/>
        <dbReference type="ChEBI" id="CHEBI:17562"/>
        <dbReference type="ChEBI" id="CHEBI:28938"/>
        <dbReference type="EC" id="3.5.4.5"/>
    </reaction>
</comment>
<comment type="catalytic activity">
    <reaction evidence="1">
        <text>2'-deoxycytidine + H2O + H(+) = 2'-deoxyuridine + NH4(+)</text>
        <dbReference type="Rhea" id="RHEA:13433"/>
        <dbReference type="ChEBI" id="CHEBI:15377"/>
        <dbReference type="ChEBI" id="CHEBI:15378"/>
        <dbReference type="ChEBI" id="CHEBI:15698"/>
        <dbReference type="ChEBI" id="CHEBI:16450"/>
        <dbReference type="ChEBI" id="CHEBI:28938"/>
        <dbReference type="EC" id="3.5.4.5"/>
    </reaction>
</comment>
<comment type="cofactor">
    <cofactor evidence="1">
        <name>Zn(2+)</name>
        <dbReference type="ChEBI" id="CHEBI:29105"/>
    </cofactor>
    <text evidence="1">Binds 1 zinc ion.</text>
</comment>
<comment type="subunit">
    <text evidence="1">Homodimer.</text>
</comment>
<comment type="similarity">
    <text evidence="1">Belongs to the cytidine and deoxycytidylate deaminase family.</text>
</comment>
<comment type="sequence caution" evidence="3">
    <conflict type="erroneous initiation">
        <sequence resource="EMBL-CDS" id="BAC94726"/>
    </conflict>
</comment>
<evidence type="ECO:0000255" key="1">
    <source>
        <dbReference type="HAMAP-Rule" id="MF_01558"/>
    </source>
</evidence>
<evidence type="ECO:0000255" key="2">
    <source>
        <dbReference type="PROSITE-ProRule" id="PRU01083"/>
    </source>
</evidence>
<evidence type="ECO:0000305" key="3"/>
<feature type="chain" id="PRO_0000171673" description="Cytidine deaminase">
    <location>
        <begin position="1"/>
        <end position="295"/>
    </location>
</feature>
<feature type="domain" description="CMP/dCMP-type deaminase 1" evidence="2">
    <location>
        <begin position="48"/>
        <end position="168"/>
    </location>
</feature>
<feature type="domain" description="CMP/dCMP-type deaminase 2" evidence="2">
    <location>
        <begin position="187"/>
        <end position="295"/>
    </location>
</feature>
<feature type="active site" description="Proton donor" evidence="1">
    <location>
        <position position="104"/>
    </location>
</feature>
<feature type="binding site" evidence="1">
    <location>
        <begin position="89"/>
        <end position="91"/>
    </location>
    <ligand>
        <name>substrate</name>
    </ligand>
</feature>
<feature type="binding site" evidence="1">
    <location>
        <position position="102"/>
    </location>
    <ligand>
        <name>Zn(2+)</name>
        <dbReference type="ChEBI" id="CHEBI:29105"/>
        <note>catalytic</note>
    </ligand>
</feature>
<feature type="binding site" evidence="1">
    <location>
        <position position="129"/>
    </location>
    <ligand>
        <name>Zn(2+)</name>
        <dbReference type="ChEBI" id="CHEBI:29105"/>
        <note>catalytic</note>
    </ligand>
</feature>
<feature type="binding site" evidence="1">
    <location>
        <position position="132"/>
    </location>
    <ligand>
        <name>Zn(2+)</name>
        <dbReference type="ChEBI" id="CHEBI:29105"/>
        <note>catalytic</note>
    </ligand>
</feature>
<reference key="1">
    <citation type="journal article" date="2003" name="Genome Res.">
        <title>Comparative genome analysis of Vibrio vulnificus, a marine pathogen.</title>
        <authorList>
            <person name="Chen C.-Y."/>
            <person name="Wu K.-M."/>
            <person name="Chang Y.-C."/>
            <person name="Chang C.-H."/>
            <person name="Tsai H.-C."/>
            <person name="Liao T.-L."/>
            <person name="Liu Y.-M."/>
            <person name="Chen H.-J."/>
            <person name="Shen A.B.-T."/>
            <person name="Li J.-C."/>
            <person name="Su T.-L."/>
            <person name="Shao C.-P."/>
            <person name="Lee C.-T."/>
            <person name="Hor L.-I."/>
            <person name="Tsai S.-F."/>
        </authorList>
    </citation>
    <scope>NUCLEOTIDE SEQUENCE [LARGE SCALE GENOMIC DNA]</scope>
    <source>
        <strain>YJ016</strain>
    </source>
</reference>
<keyword id="KW-0378">Hydrolase</keyword>
<keyword id="KW-0479">Metal-binding</keyword>
<keyword id="KW-0862">Zinc</keyword>
<organism>
    <name type="scientific">Vibrio vulnificus (strain YJ016)</name>
    <dbReference type="NCBI Taxonomy" id="196600"/>
    <lineage>
        <taxon>Bacteria</taxon>
        <taxon>Pseudomonadati</taxon>
        <taxon>Pseudomonadota</taxon>
        <taxon>Gammaproteobacteria</taxon>
        <taxon>Vibrionales</taxon>
        <taxon>Vibrionaceae</taxon>
        <taxon>Vibrio</taxon>
    </lineage>
</organism>
<protein>
    <recommendedName>
        <fullName evidence="1">Cytidine deaminase</fullName>
        <ecNumber evidence="1">3.5.4.5</ecNumber>
    </recommendedName>
    <alternativeName>
        <fullName evidence="1">Cytidine aminohydrolase</fullName>
        <shortName evidence="1">CDA</shortName>
    </alternativeName>
</protein>
<proteinExistence type="inferred from homology"/>
<dbReference type="EC" id="3.5.4.5" evidence="1"/>
<dbReference type="EMBL" id="BA000037">
    <property type="protein sequence ID" value="BAC94726.1"/>
    <property type="status" value="ALT_INIT"/>
    <property type="molecule type" value="Genomic_DNA"/>
</dbReference>
<dbReference type="RefSeq" id="WP_011150515.1">
    <property type="nucleotide sequence ID" value="NC_005139.1"/>
</dbReference>
<dbReference type="SMR" id="Q7MK48"/>
<dbReference type="STRING" id="672.VV93_v1c17220"/>
<dbReference type="KEGG" id="vvy:VV1962"/>
<dbReference type="PATRIC" id="fig|196600.6.peg.1990"/>
<dbReference type="eggNOG" id="COG0295">
    <property type="taxonomic scope" value="Bacteria"/>
</dbReference>
<dbReference type="HOGENOM" id="CLU_052424_0_0_6"/>
<dbReference type="Proteomes" id="UP000002675">
    <property type="component" value="Chromosome I"/>
</dbReference>
<dbReference type="GO" id="GO:0005829">
    <property type="term" value="C:cytosol"/>
    <property type="evidence" value="ECO:0007669"/>
    <property type="project" value="TreeGrafter"/>
</dbReference>
<dbReference type="GO" id="GO:0004126">
    <property type="term" value="F:cytidine deaminase activity"/>
    <property type="evidence" value="ECO:0007669"/>
    <property type="project" value="UniProtKB-UniRule"/>
</dbReference>
<dbReference type="GO" id="GO:0042802">
    <property type="term" value="F:identical protein binding"/>
    <property type="evidence" value="ECO:0007669"/>
    <property type="project" value="UniProtKB-ARBA"/>
</dbReference>
<dbReference type="GO" id="GO:0008270">
    <property type="term" value="F:zinc ion binding"/>
    <property type="evidence" value="ECO:0007669"/>
    <property type="project" value="UniProtKB-UniRule"/>
</dbReference>
<dbReference type="GO" id="GO:0009972">
    <property type="term" value="P:cytidine deamination"/>
    <property type="evidence" value="ECO:0007669"/>
    <property type="project" value="InterPro"/>
</dbReference>
<dbReference type="CDD" id="cd01283">
    <property type="entry name" value="cytidine_deaminase"/>
    <property type="match status" value="2"/>
</dbReference>
<dbReference type="FunFam" id="3.40.140.10:FF:000007">
    <property type="entry name" value="Cytidine deaminase"/>
    <property type="match status" value="1"/>
</dbReference>
<dbReference type="Gene3D" id="3.40.140.10">
    <property type="entry name" value="Cytidine Deaminase, domain 2"/>
    <property type="match status" value="2"/>
</dbReference>
<dbReference type="HAMAP" id="MF_01558">
    <property type="entry name" value="Cyt_deam"/>
    <property type="match status" value="1"/>
</dbReference>
<dbReference type="InterPro" id="IPR016192">
    <property type="entry name" value="APOBEC/CMP_deaminase_Zn-bd"/>
</dbReference>
<dbReference type="InterPro" id="IPR002125">
    <property type="entry name" value="CMP_dCMP_dom"/>
</dbReference>
<dbReference type="InterPro" id="IPR013171">
    <property type="entry name" value="Cyd/dCyd_deaminase_Zn-bd"/>
</dbReference>
<dbReference type="InterPro" id="IPR050202">
    <property type="entry name" value="Cyt/Deoxycyt_deaminase"/>
</dbReference>
<dbReference type="InterPro" id="IPR006263">
    <property type="entry name" value="Cyt_deam_dimer"/>
</dbReference>
<dbReference type="InterPro" id="IPR016193">
    <property type="entry name" value="Cytidine_deaminase-like"/>
</dbReference>
<dbReference type="InterPro" id="IPR020797">
    <property type="entry name" value="Cytidine_deaminase_bacteria"/>
</dbReference>
<dbReference type="NCBIfam" id="TIGR01355">
    <property type="entry name" value="cyt_deam_dimer"/>
    <property type="match status" value="1"/>
</dbReference>
<dbReference type="NCBIfam" id="NF006537">
    <property type="entry name" value="PRK09027.1"/>
    <property type="match status" value="1"/>
</dbReference>
<dbReference type="PANTHER" id="PTHR11644">
    <property type="entry name" value="CYTIDINE DEAMINASE"/>
    <property type="match status" value="1"/>
</dbReference>
<dbReference type="PANTHER" id="PTHR11644:SF2">
    <property type="entry name" value="CYTIDINE DEAMINASE"/>
    <property type="match status" value="1"/>
</dbReference>
<dbReference type="Pfam" id="PF00383">
    <property type="entry name" value="dCMP_cyt_deam_1"/>
    <property type="match status" value="1"/>
</dbReference>
<dbReference type="Pfam" id="PF08211">
    <property type="entry name" value="dCMP_cyt_deam_2"/>
    <property type="match status" value="1"/>
</dbReference>
<dbReference type="PIRSF" id="PIRSF006334">
    <property type="entry name" value="Cdd_plus_pseudo"/>
    <property type="match status" value="1"/>
</dbReference>
<dbReference type="SUPFAM" id="SSF53927">
    <property type="entry name" value="Cytidine deaminase-like"/>
    <property type="match status" value="2"/>
</dbReference>
<dbReference type="PROSITE" id="PS00903">
    <property type="entry name" value="CYT_DCMP_DEAMINASES_1"/>
    <property type="match status" value="1"/>
</dbReference>
<dbReference type="PROSITE" id="PS51747">
    <property type="entry name" value="CYT_DCMP_DEAMINASES_2"/>
    <property type="match status" value="2"/>
</dbReference>
<gene>
    <name evidence="1" type="primary">cdd</name>
    <name type="ordered locus">VV1962</name>
</gene>
<accession>Q7MK48</accession>
<sequence>MKSRFENALASAPESLSRHLAPIILAADFDASLSTVQFDELLKQTGMTDNQLRVALLPFAAAYSYAPISEFYVGAIVRGLSGTLYFGANMEFDGVQLGQTVHAEQSAISHAWMKGEQGLSDITINFSPCGHCRQFMNELSSAKELKIQLPEREEKKLHDYLPDSFGPSDLGIESALMSQVHHGFATEDDDALMQRAVEAMNRSHAPYTHNLSGVALQTESGRVYLGAYAENAAFNPSLPPLQVALIQLLLAGERFENIQSAALVESHKGKISHLACTQSTLEALNPDIPVSYLSL</sequence>